<comment type="function">
    <text evidence="1">Stabilizes TBP binding to an archaeal box-A promoter. Also responsible for recruiting RNA polymerase II to the pre-initiation complex (DNA-TBP-TFIIB).</text>
</comment>
<comment type="similarity">
    <text evidence="1">Belongs to the TFIIB family.</text>
</comment>
<sequence>MTTSEPYERAFDEDIQRGTTEPCPECGGPVRTNSAETVCADCGLIIDEQSIDRGPEWHRDDADTAKRTGAPLTPARHDRGLSTVIGSGQDARGTALSSEKRRRLARMRREQSRGRWRSTKERNLGHGLTEIRRIASALGLADSVRDQACQLFRTAQNERLLKGRSIEAMAAASVFGACRCNGESWLIDDVAPMAQVGQNRVENAYTVLNEELGLPTPPVSLDQFVPRLASDLGCTDVVRRRAEELVVQAVDAGITTGVHPSGFAAACLYMAACVHDAPLTQADAAAAAGVTVETIRSHRDRLLSIVE</sequence>
<proteinExistence type="inferred from homology"/>
<gene>
    <name evidence="1" type="primary">tfbE</name>
    <name type="ordered locus">VNG_6389G</name>
</gene>
<keyword id="KW-0479">Metal-binding</keyword>
<keyword id="KW-0614">Plasmid</keyword>
<keyword id="KW-1185">Reference proteome</keyword>
<keyword id="KW-0677">Repeat</keyword>
<keyword id="KW-0804">Transcription</keyword>
<keyword id="KW-0805">Transcription regulation</keyword>
<keyword id="KW-0862">Zinc</keyword>
<keyword id="KW-0863">Zinc-finger</keyword>
<protein>
    <recommendedName>
        <fullName evidence="1">Transcription initiation factor IIB 5</fullName>
        <shortName evidence="1">TFIIB 5</shortName>
    </recommendedName>
</protein>
<dbReference type="EMBL" id="AE004438">
    <property type="protein sequence ID" value="AAG21002.1"/>
    <property type="molecule type" value="Genomic_DNA"/>
</dbReference>
<dbReference type="RefSeq" id="WP_010904212.1">
    <property type="nucleotide sequence ID" value="NC_002608.1"/>
</dbReference>
<dbReference type="SMR" id="Q9HHH8"/>
<dbReference type="GeneID" id="5955039"/>
<dbReference type="KEGG" id="hal:VNG_6389G"/>
<dbReference type="PATRIC" id="fig|64091.14.peg.2339"/>
<dbReference type="HOGENOM" id="CLU_043736_0_0_2"/>
<dbReference type="InParanoid" id="Q9HHH8"/>
<dbReference type="OrthoDB" id="7429at2157"/>
<dbReference type="PhylomeDB" id="Q9HHH8"/>
<dbReference type="Proteomes" id="UP000000554">
    <property type="component" value="Plasmid pNRC200"/>
</dbReference>
<dbReference type="GO" id="GO:0097550">
    <property type="term" value="C:transcription preinitiation complex"/>
    <property type="evidence" value="ECO:0000318"/>
    <property type="project" value="GO_Central"/>
</dbReference>
<dbReference type="GO" id="GO:0003700">
    <property type="term" value="F:DNA-binding transcription factor activity"/>
    <property type="evidence" value="ECO:0007669"/>
    <property type="project" value="UniProtKB-UniRule"/>
</dbReference>
<dbReference type="GO" id="GO:0017025">
    <property type="term" value="F:TBP-class protein binding"/>
    <property type="evidence" value="ECO:0007669"/>
    <property type="project" value="InterPro"/>
</dbReference>
<dbReference type="GO" id="GO:0008270">
    <property type="term" value="F:zinc ion binding"/>
    <property type="evidence" value="ECO:0007669"/>
    <property type="project" value="UniProtKB-UniRule"/>
</dbReference>
<dbReference type="GO" id="GO:0006352">
    <property type="term" value="P:DNA-templated transcription initiation"/>
    <property type="evidence" value="ECO:0000318"/>
    <property type="project" value="GO_Central"/>
</dbReference>
<dbReference type="GO" id="GO:0070897">
    <property type="term" value="P:transcription preinitiation complex assembly"/>
    <property type="evidence" value="ECO:0007669"/>
    <property type="project" value="InterPro"/>
</dbReference>
<dbReference type="Gene3D" id="1.10.472.170">
    <property type="match status" value="1"/>
</dbReference>
<dbReference type="Gene3D" id="1.10.472.10">
    <property type="entry name" value="Cyclin-like"/>
    <property type="match status" value="1"/>
</dbReference>
<dbReference type="HAMAP" id="MF_00383">
    <property type="entry name" value="TF2B_arch"/>
    <property type="match status" value="1"/>
</dbReference>
<dbReference type="InterPro" id="IPR013763">
    <property type="entry name" value="Cyclin-like_dom"/>
</dbReference>
<dbReference type="InterPro" id="IPR036915">
    <property type="entry name" value="Cyclin-like_sf"/>
</dbReference>
<dbReference type="InterPro" id="IPR000812">
    <property type="entry name" value="TFIIB"/>
</dbReference>
<dbReference type="InterPro" id="IPR023484">
    <property type="entry name" value="TFIIB_arc"/>
</dbReference>
<dbReference type="InterPro" id="IPR013150">
    <property type="entry name" value="TFIIB_cyclin"/>
</dbReference>
<dbReference type="InterPro" id="IPR013137">
    <property type="entry name" value="Znf_TFIIB"/>
</dbReference>
<dbReference type="PANTHER" id="PTHR11618:SF13">
    <property type="entry name" value="TRANSCRIPTION INITIATION FACTOR IIB"/>
    <property type="match status" value="1"/>
</dbReference>
<dbReference type="PANTHER" id="PTHR11618">
    <property type="entry name" value="TRANSCRIPTION INITIATION FACTOR IIB-RELATED"/>
    <property type="match status" value="1"/>
</dbReference>
<dbReference type="Pfam" id="PF00382">
    <property type="entry name" value="TFIIB"/>
    <property type="match status" value="2"/>
</dbReference>
<dbReference type="Pfam" id="PF08271">
    <property type="entry name" value="Zn_Ribbon_TF"/>
    <property type="match status" value="1"/>
</dbReference>
<dbReference type="PRINTS" id="PR00685">
    <property type="entry name" value="TIFACTORIIB"/>
</dbReference>
<dbReference type="SMART" id="SM00385">
    <property type="entry name" value="CYCLIN"/>
    <property type="match status" value="2"/>
</dbReference>
<dbReference type="SUPFAM" id="SSF47954">
    <property type="entry name" value="Cyclin-like"/>
    <property type="match status" value="2"/>
</dbReference>
<dbReference type="SUPFAM" id="SSF57783">
    <property type="entry name" value="Zinc beta-ribbon"/>
    <property type="match status" value="1"/>
</dbReference>
<geneLocation type="plasmid">
    <name>pNRC200</name>
</geneLocation>
<organism>
    <name type="scientific">Halobacterium salinarum (strain ATCC 700922 / JCM 11081 / NRC-1)</name>
    <name type="common">Halobacterium halobium</name>
    <dbReference type="NCBI Taxonomy" id="64091"/>
    <lineage>
        <taxon>Archaea</taxon>
        <taxon>Methanobacteriati</taxon>
        <taxon>Methanobacteriota</taxon>
        <taxon>Stenosarchaea group</taxon>
        <taxon>Halobacteria</taxon>
        <taxon>Halobacteriales</taxon>
        <taxon>Halobacteriaceae</taxon>
        <taxon>Halobacterium</taxon>
        <taxon>Halobacterium salinarum NRC-34001</taxon>
    </lineage>
</organism>
<name>TF2B5_HALSA</name>
<reference key="1">
    <citation type="journal article" date="2000" name="Proc. Natl. Acad. Sci. U.S.A.">
        <title>Genome sequence of Halobacterium species NRC-1.</title>
        <authorList>
            <person name="Ng W.V."/>
            <person name="Kennedy S.P."/>
            <person name="Mahairas G.G."/>
            <person name="Berquist B."/>
            <person name="Pan M."/>
            <person name="Shukla H.D."/>
            <person name="Lasky S.R."/>
            <person name="Baliga N.S."/>
            <person name="Thorsson V."/>
            <person name="Sbrogna J."/>
            <person name="Swartzell S."/>
            <person name="Weir D."/>
            <person name="Hall J."/>
            <person name="Dahl T.A."/>
            <person name="Welti R."/>
            <person name="Goo Y.A."/>
            <person name="Leithauser B."/>
            <person name="Keller K."/>
            <person name="Cruz R."/>
            <person name="Danson M.J."/>
            <person name="Hough D.W."/>
            <person name="Maddocks D.G."/>
            <person name="Jablonski P.E."/>
            <person name="Krebs M.P."/>
            <person name="Angevine C.M."/>
            <person name="Dale H."/>
            <person name="Isenbarger T.A."/>
            <person name="Peck R.F."/>
            <person name="Pohlschroder M."/>
            <person name="Spudich J.L."/>
            <person name="Jung K.-H."/>
            <person name="Alam M."/>
            <person name="Freitas T."/>
            <person name="Hou S."/>
            <person name="Daniels C.J."/>
            <person name="Dennis P.P."/>
            <person name="Omer A.D."/>
            <person name="Ebhardt H."/>
            <person name="Lowe T.M."/>
            <person name="Liang P."/>
            <person name="Riley M."/>
            <person name="Hood L."/>
            <person name="DasSarma S."/>
        </authorList>
    </citation>
    <scope>NUCLEOTIDE SEQUENCE [LARGE SCALE GENOMIC DNA]</scope>
    <source>
        <strain>ATCC 700922 / JCM 11081 / NRC-1</strain>
    </source>
</reference>
<evidence type="ECO:0000255" key="1">
    <source>
        <dbReference type="HAMAP-Rule" id="MF_00383"/>
    </source>
</evidence>
<evidence type="ECO:0000256" key="2">
    <source>
        <dbReference type="SAM" id="MobiDB-lite"/>
    </source>
</evidence>
<feature type="chain" id="PRO_0000119315" description="Transcription initiation factor IIB 5">
    <location>
        <begin position="1"/>
        <end position="307"/>
    </location>
</feature>
<feature type="repeat" description="1">
    <location>
        <begin position="129"/>
        <end position="212"/>
    </location>
</feature>
<feature type="repeat" description="2">
    <location>
        <begin position="223"/>
        <end position="304"/>
    </location>
</feature>
<feature type="zinc finger region" description="TFIIB-type" evidence="1">
    <location>
        <begin position="19"/>
        <end position="47"/>
    </location>
</feature>
<feature type="region of interest" description="Disordered" evidence="2">
    <location>
        <begin position="54"/>
        <end position="121"/>
    </location>
</feature>
<feature type="compositionally biased region" description="Basic and acidic residues" evidence="2">
    <location>
        <begin position="54"/>
        <end position="66"/>
    </location>
</feature>
<feature type="compositionally biased region" description="Basic and acidic residues" evidence="2">
    <location>
        <begin position="107"/>
        <end position="121"/>
    </location>
</feature>
<feature type="binding site" evidence="1">
    <location>
        <position position="23"/>
    </location>
    <ligand>
        <name>Zn(2+)</name>
        <dbReference type="ChEBI" id="CHEBI:29105"/>
    </ligand>
</feature>
<feature type="binding site" evidence="1">
    <location>
        <position position="26"/>
    </location>
    <ligand>
        <name>Zn(2+)</name>
        <dbReference type="ChEBI" id="CHEBI:29105"/>
    </ligand>
</feature>
<feature type="binding site" evidence="1">
    <location>
        <position position="39"/>
    </location>
    <ligand>
        <name>Zn(2+)</name>
        <dbReference type="ChEBI" id="CHEBI:29105"/>
    </ligand>
</feature>
<feature type="binding site" evidence="1">
    <location>
        <position position="42"/>
    </location>
    <ligand>
        <name>Zn(2+)</name>
        <dbReference type="ChEBI" id="CHEBI:29105"/>
    </ligand>
</feature>
<accession>Q9HHH8</accession>